<keyword id="KW-0963">Cytoplasm</keyword>
<keyword id="KW-1185">Reference proteome</keyword>
<keyword id="KW-0687">Ribonucleoprotein</keyword>
<keyword id="KW-0689">Ribosomal protein</keyword>
<keyword id="KW-0694">RNA-binding</keyword>
<keyword id="KW-0699">rRNA-binding</keyword>
<comment type="subcellular location">
    <subcellularLocation>
        <location>Cytoplasm</location>
    </subcellularLocation>
</comment>
<comment type="similarity">
    <text evidence="1">Belongs to the eukaryotic ribosomal protein eS4 family.</text>
</comment>
<gene>
    <name type="primary">RPS4</name>
</gene>
<proteinExistence type="evidence at transcript level"/>
<sequence length="264" mass="29958">MARGLKKHLKRLNAPKHWMLDKLGGAFAPKPSSGPHKSRECLPLVIIMRNRLKYALTYREVISILMQRQVMVDGKVRTDKTYPAGFMDVVSIPKTNENFRLLYDTKGRFRLHSLRDEESKFKLCKVRSVQFGQKGIPYLNTYDGRTIRYPDPLIKANDTIKLDLESNKIVDFIKFDVGNVVMVTGGRNRGRVGVIKNREKHKGSFETLHIQDSQGHEFATRLGNVFTLGKGTKPWVSLPKGKGIKLTIIEDARKRLAAQSATPA</sequence>
<feature type="chain" id="PRO_0000130837" description="Small ribosomal subunit protein eS4">
    <location>
        <begin position="1"/>
        <end position="264"/>
    </location>
</feature>
<feature type="domain" description="S4 RNA-binding">
    <location>
        <begin position="42"/>
        <end position="104"/>
    </location>
</feature>
<reference key="1">
    <citation type="journal article" date="1994" name="Biochim. Biophys. Acta">
        <title>Primary structure and expression of a gene encoding the cytosolic ribosomal protein S4 from potato.</title>
        <authorList>
            <person name="Braun H.P."/>
            <person name="Emmermann M."/>
            <person name="Mentzel H."/>
            <person name="Schmitz U.K."/>
        </authorList>
    </citation>
    <scope>NUCLEOTIDE SEQUENCE [MRNA]</scope>
    <source>
        <strain>cv. Desiree</strain>
        <tissue>Tuber</tissue>
    </source>
</reference>
<name>RS4_SOLTU</name>
<organism>
    <name type="scientific">Solanum tuberosum</name>
    <name type="common">Potato</name>
    <dbReference type="NCBI Taxonomy" id="4113"/>
    <lineage>
        <taxon>Eukaryota</taxon>
        <taxon>Viridiplantae</taxon>
        <taxon>Streptophyta</taxon>
        <taxon>Embryophyta</taxon>
        <taxon>Tracheophyta</taxon>
        <taxon>Spermatophyta</taxon>
        <taxon>Magnoliopsida</taxon>
        <taxon>eudicotyledons</taxon>
        <taxon>Gunneridae</taxon>
        <taxon>Pentapetalae</taxon>
        <taxon>asterids</taxon>
        <taxon>lamiids</taxon>
        <taxon>Solanales</taxon>
        <taxon>Solanaceae</taxon>
        <taxon>Solanoideae</taxon>
        <taxon>Solaneae</taxon>
        <taxon>Solanum</taxon>
    </lineage>
</organism>
<protein>
    <recommendedName>
        <fullName evidence="1">Small ribosomal subunit protein eS4</fullName>
    </recommendedName>
    <alternativeName>
        <fullName>40S ribosomal protein S4</fullName>
    </alternativeName>
</protein>
<dbReference type="EMBL" id="X76651">
    <property type="protein sequence ID" value="CAA54095.1"/>
    <property type="molecule type" value="mRNA"/>
</dbReference>
<dbReference type="PIR" id="S47642">
    <property type="entry name" value="S47642"/>
</dbReference>
<dbReference type="RefSeq" id="NP_001275148.1">
    <property type="nucleotide sequence ID" value="NM_001288219.1"/>
</dbReference>
<dbReference type="SMR" id="P46300"/>
<dbReference type="FunCoup" id="P46300">
    <property type="interactions" value="2487"/>
</dbReference>
<dbReference type="STRING" id="4113.P46300"/>
<dbReference type="PaxDb" id="4113-PGSC0003DMT400054543"/>
<dbReference type="EnsemblPlants" id="RHC06H1G0384.2.1">
    <property type="protein sequence ID" value="RHC06H1G0384.2.1"/>
    <property type="gene ID" value="RHC06H1G0384.2"/>
</dbReference>
<dbReference type="GeneID" id="102604933"/>
<dbReference type="Gramene" id="RHC06H1G0384.2.1">
    <property type="protein sequence ID" value="RHC06H1G0384.2.1"/>
    <property type="gene ID" value="RHC06H1G0384.2"/>
</dbReference>
<dbReference type="KEGG" id="sot:102604933"/>
<dbReference type="eggNOG" id="KOG0378">
    <property type="taxonomic scope" value="Eukaryota"/>
</dbReference>
<dbReference type="InParanoid" id="P46300"/>
<dbReference type="OrthoDB" id="1268481at2759"/>
<dbReference type="Proteomes" id="UP000011115">
    <property type="component" value="Unassembled WGS sequence"/>
</dbReference>
<dbReference type="ExpressionAtlas" id="P46300">
    <property type="expression patterns" value="baseline and differential"/>
</dbReference>
<dbReference type="GO" id="GO:0022627">
    <property type="term" value="C:cytosolic small ribosomal subunit"/>
    <property type="evidence" value="ECO:0000318"/>
    <property type="project" value="GO_Central"/>
</dbReference>
<dbReference type="GO" id="GO:0003723">
    <property type="term" value="F:RNA binding"/>
    <property type="evidence" value="ECO:0000318"/>
    <property type="project" value="GO_Central"/>
</dbReference>
<dbReference type="GO" id="GO:0019843">
    <property type="term" value="F:rRNA binding"/>
    <property type="evidence" value="ECO:0007669"/>
    <property type="project" value="UniProtKB-KW"/>
</dbReference>
<dbReference type="GO" id="GO:0003735">
    <property type="term" value="F:structural constituent of ribosome"/>
    <property type="evidence" value="ECO:0000318"/>
    <property type="project" value="GO_Central"/>
</dbReference>
<dbReference type="GO" id="GO:0006412">
    <property type="term" value="P:translation"/>
    <property type="evidence" value="ECO:0000318"/>
    <property type="project" value="GO_Central"/>
</dbReference>
<dbReference type="CDD" id="cd06087">
    <property type="entry name" value="KOW_RPS4"/>
    <property type="match status" value="1"/>
</dbReference>
<dbReference type="CDD" id="cd00165">
    <property type="entry name" value="S4"/>
    <property type="match status" value="1"/>
</dbReference>
<dbReference type="FunFam" id="2.30.30.30:FF:000005">
    <property type="entry name" value="40S ribosomal protein S4"/>
    <property type="match status" value="1"/>
</dbReference>
<dbReference type="FunFam" id="2.40.50.740:FF:000001">
    <property type="entry name" value="40S ribosomal protein S4"/>
    <property type="match status" value="1"/>
</dbReference>
<dbReference type="FunFam" id="3.10.290.10:FF:000002">
    <property type="entry name" value="40S ribosomal protein S4"/>
    <property type="match status" value="1"/>
</dbReference>
<dbReference type="Gene3D" id="2.30.30.30">
    <property type="match status" value="1"/>
</dbReference>
<dbReference type="Gene3D" id="2.40.50.740">
    <property type="match status" value="1"/>
</dbReference>
<dbReference type="Gene3D" id="3.10.290.10">
    <property type="entry name" value="RNA-binding S4 domain"/>
    <property type="match status" value="1"/>
</dbReference>
<dbReference type="HAMAP" id="MF_00485">
    <property type="entry name" value="Ribosomal_eS4"/>
    <property type="match status" value="1"/>
</dbReference>
<dbReference type="InterPro" id="IPR005824">
    <property type="entry name" value="KOW"/>
</dbReference>
<dbReference type="InterPro" id="IPR014722">
    <property type="entry name" value="Rib_uL2_dom2"/>
</dbReference>
<dbReference type="InterPro" id="IPR000876">
    <property type="entry name" value="Ribosomal_eS4"/>
</dbReference>
<dbReference type="InterPro" id="IPR032277">
    <property type="entry name" value="Ribosomal_eS4_C"/>
</dbReference>
<dbReference type="InterPro" id="IPR013845">
    <property type="entry name" value="Ribosomal_eS4_central_region"/>
</dbReference>
<dbReference type="InterPro" id="IPR038237">
    <property type="entry name" value="Ribosomal_eS4_central_sf"/>
</dbReference>
<dbReference type="InterPro" id="IPR041982">
    <property type="entry name" value="Ribosomal_eS4_KOW"/>
</dbReference>
<dbReference type="InterPro" id="IPR013843">
    <property type="entry name" value="Ribosomal_eS4_N"/>
</dbReference>
<dbReference type="InterPro" id="IPR018199">
    <property type="entry name" value="Ribosomal_eS4_N_CS"/>
</dbReference>
<dbReference type="InterPro" id="IPR036986">
    <property type="entry name" value="S4_RNA-bd_sf"/>
</dbReference>
<dbReference type="PANTHER" id="PTHR11581">
    <property type="entry name" value="30S/40S RIBOSOMAL PROTEIN S4"/>
    <property type="match status" value="1"/>
</dbReference>
<dbReference type="PANTHER" id="PTHR11581:SF36">
    <property type="entry name" value="SMALL RIBOSOMAL SUBUNIT PROTEIN ES4"/>
    <property type="match status" value="1"/>
</dbReference>
<dbReference type="Pfam" id="PF16121">
    <property type="entry name" value="40S_S4_C"/>
    <property type="match status" value="1"/>
</dbReference>
<dbReference type="Pfam" id="PF00467">
    <property type="entry name" value="KOW"/>
    <property type="match status" value="1"/>
</dbReference>
<dbReference type="Pfam" id="PF00900">
    <property type="entry name" value="Ribosomal_S4e"/>
    <property type="match status" value="1"/>
</dbReference>
<dbReference type="Pfam" id="PF08071">
    <property type="entry name" value="RS4NT"/>
    <property type="match status" value="1"/>
</dbReference>
<dbReference type="PIRSF" id="PIRSF002116">
    <property type="entry name" value="Ribosomal_S4"/>
    <property type="match status" value="1"/>
</dbReference>
<dbReference type="SMART" id="SM00739">
    <property type="entry name" value="KOW"/>
    <property type="match status" value="1"/>
</dbReference>
<dbReference type="PROSITE" id="PS00528">
    <property type="entry name" value="RIBOSOMAL_S4E"/>
    <property type="match status" value="1"/>
</dbReference>
<dbReference type="PROSITE" id="PS50889">
    <property type="entry name" value="S4"/>
    <property type="match status" value="1"/>
</dbReference>
<accession>P46300</accession>
<evidence type="ECO:0000305" key="1"/>